<comment type="function">
    <text evidence="2">Involved in base excision repair of DNA damaged by oxidation or by mutagenic agents. Acts as a DNA glycosylase that recognizes and removes damaged bases. Has a preference for oxidized purines, such as 7,8-dihydro-8-oxoguanine (8-oxoG). Has AP (apurinic/apyrimidinic) lyase activity and introduces nicks in the DNA strand. Cleaves the DNA backbone by beta-delta elimination to generate a single-strand break at the site of the removed base with both 3'- and 5'-phosphates.</text>
</comment>
<comment type="catalytic activity">
    <reaction evidence="2">
        <text>Hydrolysis of DNA containing ring-opened 7-methylguanine residues, releasing 2,6-diamino-4-hydroxy-5-(N-methyl)formamidopyrimidine.</text>
        <dbReference type="EC" id="3.2.2.23"/>
    </reaction>
</comment>
<comment type="catalytic activity">
    <reaction evidence="2">
        <text>2'-deoxyribonucleotide-(2'-deoxyribose 5'-phosphate)-2'-deoxyribonucleotide-DNA = a 3'-end 2'-deoxyribonucleotide-(2,3-dehydro-2,3-deoxyribose 5'-phosphate)-DNA + a 5'-end 5'-phospho-2'-deoxyribonucleoside-DNA + H(+)</text>
        <dbReference type="Rhea" id="RHEA:66592"/>
        <dbReference type="Rhea" id="RHEA-COMP:13180"/>
        <dbReference type="Rhea" id="RHEA-COMP:16897"/>
        <dbReference type="Rhea" id="RHEA-COMP:17067"/>
        <dbReference type="ChEBI" id="CHEBI:15378"/>
        <dbReference type="ChEBI" id="CHEBI:136412"/>
        <dbReference type="ChEBI" id="CHEBI:157695"/>
        <dbReference type="ChEBI" id="CHEBI:167181"/>
        <dbReference type="EC" id="4.2.99.18"/>
    </reaction>
</comment>
<comment type="cofactor">
    <cofactor evidence="2">
        <name>Zn(2+)</name>
        <dbReference type="ChEBI" id="CHEBI:29105"/>
    </cofactor>
    <text evidence="2">Binds 1 zinc ion per subunit.</text>
</comment>
<comment type="subunit">
    <text evidence="2">Monomer.</text>
</comment>
<comment type="similarity">
    <text evidence="2">Belongs to the FPG family.</text>
</comment>
<organism>
    <name type="scientific">Chromobacterium violaceum (strain ATCC 12472 / DSM 30191 / JCM 1249 / CCUG 213 / NBRC 12614 / NCIMB 9131 / NCTC 9757 / MK)</name>
    <dbReference type="NCBI Taxonomy" id="243365"/>
    <lineage>
        <taxon>Bacteria</taxon>
        <taxon>Pseudomonadati</taxon>
        <taxon>Pseudomonadota</taxon>
        <taxon>Betaproteobacteria</taxon>
        <taxon>Neisseriales</taxon>
        <taxon>Chromobacteriaceae</taxon>
        <taxon>Chromobacterium</taxon>
    </lineage>
</organism>
<reference key="1">
    <citation type="journal article" date="2003" name="Proc. Natl. Acad. Sci. U.S.A.">
        <title>The complete genome sequence of Chromobacterium violaceum reveals remarkable and exploitable bacterial adaptability.</title>
        <authorList>
            <person name="Vasconcelos A.T.R."/>
            <person name="de Almeida D.F."/>
            <person name="Hungria M."/>
            <person name="Guimaraes C.T."/>
            <person name="Antonio R.V."/>
            <person name="Almeida F.C."/>
            <person name="de Almeida L.G.P."/>
            <person name="de Almeida R."/>
            <person name="Alves-Gomes J.A."/>
            <person name="Andrade E.M."/>
            <person name="Araripe J."/>
            <person name="de Araujo M.F.F."/>
            <person name="Astolfi-Filho S."/>
            <person name="Azevedo V."/>
            <person name="Baptista A.J."/>
            <person name="Bataus L.A.M."/>
            <person name="Batista J.S."/>
            <person name="Belo A."/>
            <person name="van den Berg C."/>
            <person name="Bogo M."/>
            <person name="Bonatto S."/>
            <person name="Bordignon J."/>
            <person name="Brigido M.M."/>
            <person name="Brito C.A."/>
            <person name="Brocchi M."/>
            <person name="Burity H.A."/>
            <person name="Camargo A.A."/>
            <person name="Cardoso D.D.P."/>
            <person name="Carneiro N.P."/>
            <person name="Carraro D.M."/>
            <person name="Carvalho C.M.B."/>
            <person name="Cascardo J.C.M."/>
            <person name="Cavada B.S."/>
            <person name="Chueire L.M.O."/>
            <person name="Creczynski-Pasa T.B."/>
            <person name="Cunha-Junior N.C."/>
            <person name="Fagundes N."/>
            <person name="Falcao C.L."/>
            <person name="Fantinatti F."/>
            <person name="Farias I.P."/>
            <person name="Felipe M.S.S."/>
            <person name="Ferrari L.P."/>
            <person name="Ferro J.A."/>
            <person name="Ferro M.I.T."/>
            <person name="Franco G.R."/>
            <person name="Freitas N.S.A."/>
            <person name="Furlan L.R."/>
            <person name="Gazzinelli R.T."/>
            <person name="Gomes E.A."/>
            <person name="Goncalves P.R."/>
            <person name="Grangeiro T.B."/>
            <person name="Grattapaglia D."/>
            <person name="Grisard E.C."/>
            <person name="Hanna E.S."/>
            <person name="Jardim S.N."/>
            <person name="Laurino J."/>
            <person name="Leoi L.C.T."/>
            <person name="Lima L.F.A."/>
            <person name="Loureiro M.F."/>
            <person name="Lyra M.C.C.P."/>
            <person name="Madeira H.M.F."/>
            <person name="Manfio G.P."/>
            <person name="Maranhao A.Q."/>
            <person name="Martins W.S."/>
            <person name="di Mauro S.M.Z."/>
            <person name="de Medeiros S.R.B."/>
            <person name="Meissner R.V."/>
            <person name="Moreira M.A.M."/>
            <person name="Nascimento F.F."/>
            <person name="Nicolas M.F."/>
            <person name="Oliveira J.G."/>
            <person name="Oliveira S.C."/>
            <person name="Paixao R.F.C."/>
            <person name="Parente J.A."/>
            <person name="Pedrosa F.O."/>
            <person name="Pena S.D.J."/>
            <person name="Pereira J.O."/>
            <person name="Pereira M."/>
            <person name="Pinto L.S.R.C."/>
            <person name="Pinto L.S."/>
            <person name="Porto J.I.R."/>
            <person name="Potrich D.P."/>
            <person name="Ramalho-Neto C.E."/>
            <person name="Reis A.M.M."/>
            <person name="Rigo L.U."/>
            <person name="Rondinelli E."/>
            <person name="Santos E.B.P."/>
            <person name="Santos F.R."/>
            <person name="Schneider M.P.C."/>
            <person name="Seuanez H.N."/>
            <person name="Silva A.M.R."/>
            <person name="da Silva A.L.C."/>
            <person name="Silva D.W."/>
            <person name="Silva R."/>
            <person name="Simoes I.C."/>
            <person name="Simon D."/>
            <person name="Soares C.M.A."/>
            <person name="Soares R.B.A."/>
            <person name="Souza E.M."/>
            <person name="Souza K.R.L."/>
            <person name="Souza R.C."/>
            <person name="Steffens M.B.R."/>
            <person name="Steindel M."/>
            <person name="Teixeira S.R."/>
            <person name="Urmenyi T."/>
            <person name="Vettore A."/>
            <person name="Wassem R."/>
            <person name="Zaha A."/>
            <person name="Simpson A.J.G."/>
        </authorList>
    </citation>
    <scope>NUCLEOTIDE SEQUENCE [LARGE SCALE GENOMIC DNA]</scope>
    <source>
        <strain>ATCC 12472 / DSM 30191 / JCM 1249 / CCUG 213 / NBRC 12614 / NCIMB 9131 / NCTC 9757 / MK</strain>
    </source>
</reference>
<protein>
    <recommendedName>
        <fullName evidence="2">Formamidopyrimidine-DNA glycosylase</fullName>
        <shortName evidence="2">Fapy-DNA glycosylase</shortName>
        <ecNumber evidence="2">3.2.2.23</ecNumber>
    </recommendedName>
    <alternativeName>
        <fullName evidence="2">DNA-(apurinic or apyrimidinic site) lyase MutM</fullName>
        <shortName evidence="2">AP lyase MutM</shortName>
        <ecNumber evidence="2">4.2.99.18</ecNumber>
    </alternativeName>
</protein>
<evidence type="ECO:0000250" key="1"/>
<evidence type="ECO:0000255" key="2">
    <source>
        <dbReference type="HAMAP-Rule" id="MF_00103"/>
    </source>
</evidence>
<name>FPG_CHRVO</name>
<dbReference type="EC" id="3.2.2.23" evidence="2"/>
<dbReference type="EC" id="4.2.99.18" evidence="2"/>
<dbReference type="EMBL" id="AE016825">
    <property type="protein sequence ID" value="AAQ61722.1"/>
    <property type="molecule type" value="Genomic_DNA"/>
</dbReference>
<dbReference type="RefSeq" id="WP_011137609.1">
    <property type="nucleotide sequence ID" value="NC_005085.1"/>
</dbReference>
<dbReference type="SMR" id="Q7NQS5"/>
<dbReference type="STRING" id="243365.CV_4062"/>
<dbReference type="KEGG" id="cvi:CV_4062"/>
<dbReference type="eggNOG" id="COG0266">
    <property type="taxonomic scope" value="Bacteria"/>
</dbReference>
<dbReference type="HOGENOM" id="CLU_038423_1_1_4"/>
<dbReference type="OrthoDB" id="9800855at2"/>
<dbReference type="Proteomes" id="UP000001424">
    <property type="component" value="Chromosome"/>
</dbReference>
<dbReference type="GO" id="GO:0034039">
    <property type="term" value="F:8-oxo-7,8-dihydroguanine DNA N-glycosylase activity"/>
    <property type="evidence" value="ECO:0007669"/>
    <property type="project" value="TreeGrafter"/>
</dbReference>
<dbReference type="GO" id="GO:0140078">
    <property type="term" value="F:class I DNA-(apurinic or apyrimidinic site) endonuclease activity"/>
    <property type="evidence" value="ECO:0007669"/>
    <property type="project" value="UniProtKB-EC"/>
</dbReference>
<dbReference type="GO" id="GO:0003684">
    <property type="term" value="F:damaged DNA binding"/>
    <property type="evidence" value="ECO:0007669"/>
    <property type="project" value="InterPro"/>
</dbReference>
<dbReference type="GO" id="GO:0008270">
    <property type="term" value="F:zinc ion binding"/>
    <property type="evidence" value="ECO:0007669"/>
    <property type="project" value="UniProtKB-UniRule"/>
</dbReference>
<dbReference type="GO" id="GO:0006284">
    <property type="term" value="P:base-excision repair"/>
    <property type="evidence" value="ECO:0007669"/>
    <property type="project" value="InterPro"/>
</dbReference>
<dbReference type="CDD" id="cd08966">
    <property type="entry name" value="EcFpg-like_N"/>
    <property type="match status" value="1"/>
</dbReference>
<dbReference type="FunFam" id="1.10.8.50:FF:000003">
    <property type="entry name" value="Formamidopyrimidine-DNA glycosylase"/>
    <property type="match status" value="1"/>
</dbReference>
<dbReference type="FunFam" id="3.20.190.10:FF:000001">
    <property type="entry name" value="Formamidopyrimidine-DNA glycosylase"/>
    <property type="match status" value="1"/>
</dbReference>
<dbReference type="Gene3D" id="1.10.8.50">
    <property type="match status" value="1"/>
</dbReference>
<dbReference type="Gene3D" id="3.20.190.10">
    <property type="entry name" value="MutM-like, N-terminal"/>
    <property type="match status" value="1"/>
</dbReference>
<dbReference type="HAMAP" id="MF_00103">
    <property type="entry name" value="Fapy_DNA_glycosyl"/>
    <property type="match status" value="1"/>
</dbReference>
<dbReference type="InterPro" id="IPR015886">
    <property type="entry name" value="DNA_glyclase/AP_lyase_DNA-bd"/>
</dbReference>
<dbReference type="InterPro" id="IPR015887">
    <property type="entry name" value="DNA_glyclase_Znf_dom_DNA_BS"/>
</dbReference>
<dbReference type="InterPro" id="IPR020629">
    <property type="entry name" value="Formamido-pyr_DNA_Glyclase"/>
</dbReference>
<dbReference type="InterPro" id="IPR012319">
    <property type="entry name" value="FPG_cat"/>
</dbReference>
<dbReference type="InterPro" id="IPR035937">
    <property type="entry name" value="MutM-like_N-ter"/>
</dbReference>
<dbReference type="InterPro" id="IPR010979">
    <property type="entry name" value="Ribosomal_uS13-like_H2TH"/>
</dbReference>
<dbReference type="InterPro" id="IPR000214">
    <property type="entry name" value="Znf_DNA_glyclase/AP_lyase"/>
</dbReference>
<dbReference type="InterPro" id="IPR010663">
    <property type="entry name" value="Znf_FPG/IleRS"/>
</dbReference>
<dbReference type="NCBIfam" id="TIGR00577">
    <property type="entry name" value="fpg"/>
    <property type="match status" value="1"/>
</dbReference>
<dbReference type="NCBIfam" id="NF002211">
    <property type="entry name" value="PRK01103.1"/>
    <property type="match status" value="1"/>
</dbReference>
<dbReference type="PANTHER" id="PTHR22993">
    <property type="entry name" value="FORMAMIDOPYRIMIDINE-DNA GLYCOSYLASE"/>
    <property type="match status" value="1"/>
</dbReference>
<dbReference type="PANTHER" id="PTHR22993:SF9">
    <property type="entry name" value="FORMAMIDOPYRIMIDINE-DNA GLYCOSYLASE"/>
    <property type="match status" value="1"/>
</dbReference>
<dbReference type="Pfam" id="PF01149">
    <property type="entry name" value="Fapy_DNA_glyco"/>
    <property type="match status" value="1"/>
</dbReference>
<dbReference type="Pfam" id="PF06831">
    <property type="entry name" value="H2TH"/>
    <property type="match status" value="1"/>
</dbReference>
<dbReference type="Pfam" id="PF06827">
    <property type="entry name" value="zf-FPG_IleRS"/>
    <property type="match status" value="1"/>
</dbReference>
<dbReference type="SMART" id="SM00898">
    <property type="entry name" value="Fapy_DNA_glyco"/>
    <property type="match status" value="1"/>
</dbReference>
<dbReference type="SMART" id="SM01232">
    <property type="entry name" value="H2TH"/>
    <property type="match status" value="1"/>
</dbReference>
<dbReference type="SUPFAM" id="SSF57716">
    <property type="entry name" value="Glucocorticoid receptor-like (DNA-binding domain)"/>
    <property type="match status" value="1"/>
</dbReference>
<dbReference type="SUPFAM" id="SSF81624">
    <property type="entry name" value="N-terminal domain of MutM-like DNA repair proteins"/>
    <property type="match status" value="1"/>
</dbReference>
<dbReference type="SUPFAM" id="SSF46946">
    <property type="entry name" value="S13-like H2TH domain"/>
    <property type="match status" value="1"/>
</dbReference>
<dbReference type="PROSITE" id="PS51068">
    <property type="entry name" value="FPG_CAT"/>
    <property type="match status" value="1"/>
</dbReference>
<dbReference type="PROSITE" id="PS01242">
    <property type="entry name" value="ZF_FPG_1"/>
    <property type="match status" value="1"/>
</dbReference>
<dbReference type="PROSITE" id="PS51066">
    <property type="entry name" value="ZF_FPG_2"/>
    <property type="match status" value="1"/>
</dbReference>
<proteinExistence type="inferred from homology"/>
<keyword id="KW-0227">DNA damage</keyword>
<keyword id="KW-0234">DNA repair</keyword>
<keyword id="KW-0238">DNA-binding</keyword>
<keyword id="KW-0326">Glycosidase</keyword>
<keyword id="KW-0378">Hydrolase</keyword>
<keyword id="KW-0456">Lyase</keyword>
<keyword id="KW-0479">Metal-binding</keyword>
<keyword id="KW-0511">Multifunctional enzyme</keyword>
<keyword id="KW-1185">Reference proteome</keyword>
<keyword id="KW-0862">Zinc</keyword>
<keyword id="KW-0863">Zinc-finger</keyword>
<accession>Q7NQS5</accession>
<sequence length="270" mass="29931">MPELPEVETTRRGVEPHLEGRTLLGAVVRNPSLRWPVPPDLSERVAGEKVLAVRRRAKYLLLECESGTLLIHLGMSGSLRVMPAGAPPQKHDHLDLLLGEQVLRFRDPRRFGAVLWHLGPVEMHPLLQALGPEPLSDAFDGAALHQAIRRRGSPIKLAIMDNHVVVGVGNIYANESLFHAGISPARAACDLSRADCDRLAAEIKAVLRRAIDAGGSTLRDFVDSEGKPGYFQQTYMVYNRQEEPCRLCGTPIRQIRQGQRSTYYCPLCQP</sequence>
<feature type="initiator methionine" description="Removed" evidence="1">
    <location>
        <position position="1"/>
    </location>
</feature>
<feature type="chain" id="PRO_0000170818" description="Formamidopyrimidine-DNA glycosylase">
    <location>
        <begin position="2"/>
        <end position="270"/>
    </location>
</feature>
<feature type="zinc finger region" description="FPG-type" evidence="2">
    <location>
        <begin position="236"/>
        <end position="270"/>
    </location>
</feature>
<feature type="active site" description="Schiff-base intermediate with DNA" evidence="2">
    <location>
        <position position="2"/>
    </location>
</feature>
<feature type="active site" description="Proton donor" evidence="2">
    <location>
        <position position="3"/>
    </location>
</feature>
<feature type="active site" description="Proton donor; for beta-elimination activity" evidence="2">
    <location>
        <position position="58"/>
    </location>
</feature>
<feature type="active site" description="Proton donor; for delta-elimination activity" evidence="2">
    <location>
        <position position="260"/>
    </location>
</feature>
<feature type="binding site" evidence="2">
    <location>
        <position position="91"/>
    </location>
    <ligand>
        <name>DNA</name>
        <dbReference type="ChEBI" id="CHEBI:16991"/>
    </ligand>
</feature>
<feature type="binding site" evidence="2">
    <location>
        <position position="109"/>
    </location>
    <ligand>
        <name>DNA</name>
        <dbReference type="ChEBI" id="CHEBI:16991"/>
    </ligand>
</feature>
<feature type="binding site" evidence="2">
    <location>
        <position position="151"/>
    </location>
    <ligand>
        <name>DNA</name>
        <dbReference type="ChEBI" id="CHEBI:16991"/>
    </ligand>
</feature>
<gene>
    <name evidence="2" type="primary">mutM</name>
    <name evidence="2" type="synonym">fpg</name>
    <name type="ordered locus">CV_4062</name>
</gene>